<dbReference type="EC" id="2.7.7.67" evidence="1"/>
<dbReference type="EMBL" id="CP000505">
    <property type="protein sequence ID" value="ABL77842.1"/>
    <property type="molecule type" value="Genomic_DNA"/>
</dbReference>
<dbReference type="RefSeq" id="WP_011752107.1">
    <property type="nucleotide sequence ID" value="NC_008698.1"/>
</dbReference>
<dbReference type="SMR" id="A1RXB2"/>
<dbReference type="STRING" id="368408.Tpen_0433"/>
<dbReference type="EnsemblBacteria" id="ABL77842">
    <property type="protein sequence ID" value="ABL77842"/>
    <property type="gene ID" value="Tpen_0433"/>
</dbReference>
<dbReference type="GeneID" id="4602168"/>
<dbReference type="KEGG" id="tpe:Tpen_0433"/>
<dbReference type="eggNOG" id="arCOG04106">
    <property type="taxonomic scope" value="Archaea"/>
</dbReference>
<dbReference type="HOGENOM" id="CLU_105710_0_0_2"/>
<dbReference type="UniPathway" id="UPA00940"/>
<dbReference type="Proteomes" id="UP000000641">
    <property type="component" value="Chromosome"/>
</dbReference>
<dbReference type="GO" id="GO:0005886">
    <property type="term" value="C:plasma membrane"/>
    <property type="evidence" value="ECO:0007669"/>
    <property type="project" value="UniProtKB-SubCell"/>
</dbReference>
<dbReference type="GO" id="GO:0043338">
    <property type="term" value="F:CDP-2,3-bis-(O-geranylgeranyl)-sn-glycerol synthase activity"/>
    <property type="evidence" value="ECO:0007669"/>
    <property type="project" value="UniProtKB-EC"/>
</dbReference>
<dbReference type="GO" id="GO:0046474">
    <property type="term" value="P:glycerophospholipid biosynthetic process"/>
    <property type="evidence" value="ECO:0007669"/>
    <property type="project" value="UniProtKB-UniRule"/>
</dbReference>
<dbReference type="HAMAP" id="MF_01117">
    <property type="entry name" value="CDP_archaeol_synth"/>
    <property type="match status" value="1"/>
</dbReference>
<dbReference type="InterPro" id="IPR032690">
    <property type="entry name" value="CarS"/>
</dbReference>
<dbReference type="InterPro" id="IPR002726">
    <property type="entry name" value="CarS_archaea"/>
</dbReference>
<dbReference type="NCBIfam" id="NF003114">
    <property type="entry name" value="PRK04032.1"/>
    <property type="match status" value="1"/>
</dbReference>
<dbReference type="PANTHER" id="PTHR39650">
    <property type="entry name" value="CDP-ARCHAEOL SYNTHASE"/>
    <property type="match status" value="1"/>
</dbReference>
<dbReference type="PANTHER" id="PTHR39650:SF1">
    <property type="entry name" value="CDP-ARCHAEOL SYNTHASE"/>
    <property type="match status" value="1"/>
</dbReference>
<dbReference type="Pfam" id="PF01864">
    <property type="entry name" value="CarS-like"/>
    <property type="match status" value="1"/>
</dbReference>
<evidence type="ECO:0000255" key="1">
    <source>
        <dbReference type="HAMAP-Rule" id="MF_01117"/>
    </source>
</evidence>
<name>CDPAS_THEPD</name>
<comment type="function">
    <text evidence="1">Catalyzes the formation of CDP-2,3-bis-(O-geranylgeranyl)-sn-glycerol (CDP-archaeol) from 2,3-bis-(O-geranylgeranyl)-sn-glycerol 1-phosphate (DGGGP) and CTP. This reaction is the third ether-bond-formation step in the biosynthesis of archaeal membrane lipids.</text>
</comment>
<comment type="catalytic activity">
    <reaction evidence="1">
        <text>2,3-bis-O-(geranylgeranyl)-sn-glycerol 1-phosphate + CTP + H(+) = CDP-2,3-bis-O-(geranylgeranyl)-sn-glycerol + diphosphate</text>
        <dbReference type="Rhea" id="RHEA:25690"/>
        <dbReference type="ChEBI" id="CHEBI:15378"/>
        <dbReference type="ChEBI" id="CHEBI:33019"/>
        <dbReference type="ChEBI" id="CHEBI:37563"/>
        <dbReference type="ChEBI" id="CHEBI:58837"/>
        <dbReference type="ChEBI" id="CHEBI:58838"/>
        <dbReference type="EC" id="2.7.7.67"/>
    </reaction>
</comment>
<comment type="cofactor">
    <cofactor evidence="1">
        <name>Mg(2+)</name>
        <dbReference type="ChEBI" id="CHEBI:18420"/>
    </cofactor>
</comment>
<comment type="pathway">
    <text evidence="1">Membrane lipid metabolism; glycerophospholipid metabolism.</text>
</comment>
<comment type="subcellular location">
    <subcellularLocation>
        <location evidence="1">Cell membrane</location>
        <topology evidence="1">Multi-pass membrane protein</topology>
    </subcellularLocation>
</comment>
<comment type="similarity">
    <text evidence="1">Belongs to the CDP-archaeol synthase family.</text>
</comment>
<sequence length="204" mass="22173">MRISVYACFLGLYFLVFSLIVYVILGAEFLVSVLQPGNVARSMLWVLPAYVANASPVVFSRLVRKRWRLHPMDFGLTFVDGQRLLGDNKTFEGFLGGMLSGVLVGILLAYARFVDGVSAFLLPLGALLGDLGGAFVKRRLRIKPGEPAILLDQLDFVAGALILQGLFSKLPAAEVVVAVVLLTPIVHLLTNMAAFVLGLKDVPW</sequence>
<protein>
    <recommendedName>
        <fullName evidence="1">CDP-archaeol synthase</fullName>
        <ecNumber evidence="1">2.7.7.67</ecNumber>
    </recommendedName>
    <alternativeName>
        <fullName evidence="1">CDP-2,3-bis-(O-geranylgeranyl)-sn-glycerol synthase</fullName>
    </alternativeName>
</protein>
<organism>
    <name type="scientific">Thermofilum pendens (strain DSM 2475 / Hrk 5)</name>
    <dbReference type="NCBI Taxonomy" id="368408"/>
    <lineage>
        <taxon>Archaea</taxon>
        <taxon>Thermoproteota</taxon>
        <taxon>Thermoprotei</taxon>
        <taxon>Thermofilales</taxon>
        <taxon>Thermofilaceae</taxon>
        <taxon>Thermofilum</taxon>
    </lineage>
</organism>
<reference key="1">
    <citation type="journal article" date="2008" name="J. Bacteriol.">
        <title>Genome sequence of Thermofilum pendens reveals an exceptional loss of biosynthetic pathways without genome reduction.</title>
        <authorList>
            <person name="Anderson I."/>
            <person name="Rodriguez J."/>
            <person name="Susanti D."/>
            <person name="Porat I."/>
            <person name="Reich C."/>
            <person name="Ulrich L.E."/>
            <person name="Elkins J.G."/>
            <person name="Mavromatis K."/>
            <person name="Lykidis A."/>
            <person name="Kim E."/>
            <person name="Thompson L.S."/>
            <person name="Nolan M."/>
            <person name="Land M."/>
            <person name="Copeland A."/>
            <person name="Lapidus A."/>
            <person name="Lucas S."/>
            <person name="Detter C."/>
            <person name="Zhulin I.B."/>
            <person name="Olsen G.J."/>
            <person name="Whitman W."/>
            <person name="Mukhopadhyay B."/>
            <person name="Bristow J."/>
            <person name="Kyrpides N."/>
        </authorList>
    </citation>
    <scope>NUCLEOTIDE SEQUENCE [LARGE SCALE GENOMIC DNA]</scope>
    <source>
        <strain>DSM 2475 / Hrk 5</strain>
    </source>
</reference>
<proteinExistence type="inferred from homology"/>
<gene>
    <name evidence="1" type="primary">carS</name>
    <name type="ordered locus">Tpen_0433</name>
</gene>
<accession>A1RXB2</accession>
<feature type="chain" id="PRO_0000298289" description="CDP-archaeol synthase">
    <location>
        <begin position="1"/>
        <end position="204"/>
    </location>
</feature>
<feature type="transmembrane region" description="Helical" evidence="1">
    <location>
        <begin position="5"/>
        <end position="25"/>
    </location>
</feature>
<feature type="transmembrane region" description="Helical" evidence="1">
    <location>
        <begin position="43"/>
        <end position="63"/>
    </location>
</feature>
<feature type="transmembrane region" description="Helical" evidence="1">
    <location>
        <begin position="91"/>
        <end position="111"/>
    </location>
</feature>
<feature type="transmembrane region" description="Helical" evidence="1">
    <location>
        <begin position="116"/>
        <end position="136"/>
    </location>
</feature>
<feature type="transmembrane region" description="Helical" evidence="1">
    <location>
        <begin position="147"/>
        <end position="167"/>
    </location>
</feature>
<feature type="transmembrane region" description="Helical" evidence="1">
    <location>
        <begin position="175"/>
        <end position="195"/>
    </location>
</feature>
<keyword id="KW-1003">Cell membrane</keyword>
<keyword id="KW-0444">Lipid biosynthesis</keyword>
<keyword id="KW-0443">Lipid metabolism</keyword>
<keyword id="KW-0460">Magnesium</keyword>
<keyword id="KW-0472">Membrane</keyword>
<keyword id="KW-0594">Phospholipid biosynthesis</keyword>
<keyword id="KW-1208">Phospholipid metabolism</keyword>
<keyword id="KW-1185">Reference proteome</keyword>
<keyword id="KW-0808">Transferase</keyword>
<keyword id="KW-0812">Transmembrane</keyword>
<keyword id="KW-1133">Transmembrane helix</keyword>